<name>PPX1_MYCBO</name>
<feature type="chain" id="PRO_0000194308" description="Exopolyphosphatase 1">
    <location>
        <begin position="1"/>
        <end position="344"/>
    </location>
</feature>
<feature type="region of interest" description="Disordered" evidence="2">
    <location>
        <begin position="319"/>
        <end position="344"/>
    </location>
</feature>
<gene>
    <name evidence="4" type="ordered locus">BQ2027_MB0507</name>
</gene>
<accession>P65787</accession>
<accession>A0A1R3XXP1</accession>
<accession>Q11161</accession>
<accession>X2BF85</accession>
<proteinExistence type="inferred from homology"/>
<keyword id="KW-0378">Hydrolase</keyword>
<keyword id="KW-1185">Reference proteome</keyword>
<comment type="function">
    <text evidence="1">Degradation of inorganic polyphosphates (polyP). Releases orthophosphate processively from the ends of the polyP chain.</text>
</comment>
<comment type="catalytic activity">
    <reaction evidence="1">
        <text>[phosphate](n) + H2O = [phosphate](n-1) + phosphate + H(+)</text>
        <dbReference type="Rhea" id="RHEA:21528"/>
        <dbReference type="Rhea" id="RHEA-COMP:9859"/>
        <dbReference type="Rhea" id="RHEA-COMP:14279"/>
        <dbReference type="ChEBI" id="CHEBI:15377"/>
        <dbReference type="ChEBI" id="CHEBI:15378"/>
        <dbReference type="ChEBI" id="CHEBI:16838"/>
        <dbReference type="ChEBI" id="CHEBI:43474"/>
        <dbReference type="EC" id="3.6.1.11"/>
    </reaction>
</comment>
<comment type="subunit">
    <text evidence="1">Homodimer.</text>
</comment>
<comment type="similarity">
    <text evidence="3">Belongs to the GppA/Ppx family.</text>
</comment>
<comment type="sequence caution" evidence="1">
    <conflict type="erroneous initiation">
        <sequence resource="EMBL-CDS" id="SIT99102"/>
    </conflict>
    <text>Truncated N-terminus.</text>
</comment>
<protein>
    <recommendedName>
        <fullName evidence="1">Exopolyphosphatase 1</fullName>
        <shortName evidence="1">ExopolyPase 1</shortName>
        <ecNumber evidence="1">3.6.1.11</ecNumber>
    </recommendedName>
</protein>
<organism>
    <name type="scientific">Mycobacterium bovis (strain ATCC BAA-935 / AF2122/97)</name>
    <dbReference type="NCBI Taxonomy" id="233413"/>
    <lineage>
        <taxon>Bacteria</taxon>
        <taxon>Bacillati</taxon>
        <taxon>Actinomycetota</taxon>
        <taxon>Actinomycetes</taxon>
        <taxon>Mycobacteriales</taxon>
        <taxon>Mycobacteriaceae</taxon>
        <taxon>Mycobacterium</taxon>
        <taxon>Mycobacterium tuberculosis complex</taxon>
    </lineage>
</organism>
<evidence type="ECO:0000250" key="1">
    <source>
        <dbReference type="UniProtKB" id="P9WHV5"/>
    </source>
</evidence>
<evidence type="ECO:0000256" key="2">
    <source>
        <dbReference type="SAM" id="MobiDB-lite"/>
    </source>
</evidence>
<evidence type="ECO:0000305" key="3"/>
<evidence type="ECO:0000312" key="4">
    <source>
        <dbReference type="EMBL" id="SIT99102.1"/>
    </source>
</evidence>
<sequence>MRLGVLDVGSNTVHLLVVDAHRGGHPTPMSSTKATLRLAEATDSSGKITKRGADKLISTIDEFAKIAISSGCAELMAFATSAVRDAENSEDVLSRVRKETGVELQALRGEDESRLTFLAVRRWYGWSAGRILNLDIGGGSLEVSSGVDEEPEIALSLPLGAGRLTREWLPDDPPGRRRVAMLRDWLDAELAEPSVTVLEAGSPDLAVATSKTFRSLARLTGAAPSMAGPRVKRTLTANGLRQLIAFISRMTAVDRAELEGVSADRAPQIVAGALVAEASMRALSIEAVEICPWALREGLILRKLDSEADGTALIESSSVHTSVRAVGGQPADRNAANRSRGSKP</sequence>
<reference key="1">
    <citation type="journal article" date="2003" name="Proc. Natl. Acad. Sci. U.S.A.">
        <title>The complete genome sequence of Mycobacterium bovis.</title>
        <authorList>
            <person name="Garnier T."/>
            <person name="Eiglmeier K."/>
            <person name="Camus J.-C."/>
            <person name="Medina N."/>
            <person name="Mansoor H."/>
            <person name="Pryor M."/>
            <person name="Duthoy S."/>
            <person name="Grondin S."/>
            <person name="Lacroix C."/>
            <person name="Monsempe C."/>
            <person name="Simon S."/>
            <person name="Harris B."/>
            <person name="Atkin R."/>
            <person name="Doggett J."/>
            <person name="Mayes R."/>
            <person name="Keating L."/>
            <person name="Wheeler P.R."/>
            <person name="Parkhill J."/>
            <person name="Barrell B.G."/>
            <person name="Cole S.T."/>
            <person name="Gordon S.V."/>
            <person name="Hewinson R.G."/>
        </authorList>
    </citation>
    <scope>NUCLEOTIDE SEQUENCE [LARGE SCALE GENOMIC DNA]</scope>
    <source>
        <strain>ATCC BAA-935 / AF2122/97</strain>
    </source>
</reference>
<reference key="2">
    <citation type="journal article" date="2017" name="Genome Announc.">
        <title>Updated reference genome sequence and annotation of Mycobacterium bovis AF2122/97.</title>
        <authorList>
            <person name="Malone K.M."/>
            <person name="Farrell D."/>
            <person name="Stuber T.P."/>
            <person name="Schubert O.T."/>
            <person name="Aebersold R."/>
            <person name="Robbe-Austerman S."/>
            <person name="Gordon S.V."/>
        </authorList>
    </citation>
    <scope>NUCLEOTIDE SEQUENCE [LARGE SCALE GENOMIC DNA]</scope>
    <scope>GENOME REANNOTATION</scope>
    <source>
        <strain>ATCC BAA-935 / AF2122/97</strain>
    </source>
</reference>
<dbReference type="EC" id="3.6.1.11" evidence="1"/>
<dbReference type="EMBL" id="LT708304">
    <property type="protein sequence ID" value="SIT99102.1"/>
    <property type="status" value="ALT_INIT"/>
    <property type="molecule type" value="Genomic_DNA"/>
</dbReference>
<dbReference type="SMR" id="P65787"/>
<dbReference type="PATRIC" id="fig|233413.5.peg.552"/>
<dbReference type="Proteomes" id="UP000001419">
    <property type="component" value="Chromosome"/>
</dbReference>
<dbReference type="GO" id="GO:0004309">
    <property type="term" value="F:exopolyphosphatase activity"/>
    <property type="evidence" value="ECO:0007669"/>
    <property type="project" value="UniProtKB-EC"/>
</dbReference>
<dbReference type="CDD" id="cd24056">
    <property type="entry name" value="ASKHA_NBD_MtPPX1-like"/>
    <property type="match status" value="1"/>
</dbReference>
<dbReference type="FunFam" id="3.30.420.40:FF:000138">
    <property type="entry name" value="Exopolyphosphatase 1"/>
    <property type="match status" value="1"/>
</dbReference>
<dbReference type="FunFam" id="3.30.420.150:FF:000006">
    <property type="entry name" value="Ppx/GppA family phosphatase"/>
    <property type="match status" value="1"/>
</dbReference>
<dbReference type="Gene3D" id="3.30.420.40">
    <property type="match status" value="1"/>
</dbReference>
<dbReference type="Gene3D" id="3.30.420.150">
    <property type="entry name" value="Exopolyphosphatase. Domain 2"/>
    <property type="match status" value="1"/>
</dbReference>
<dbReference type="InterPro" id="IPR043129">
    <property type="entry name" value="ATPase_NBD"/>
</dbReference>
<dbReference type="InterPro" id="IPR050273">
    <property type="entry name" value="GppA/Ppx_hydrolase"/>
</dbReference>
<dbReference type="InterPro" id="IPR003695">
    <property type="entry name" value="Ppx_GppA_N"/>
</dbReference>
<dbReference type="PANTHER" id="PTHR30005">
    <property type="entry name" value="EXOPOLYPHOSPHATASE"/>
    <property type="match status" value="1"/>
</dbReference>
<dbReference type="PANTHER" id="PTHR30005:SF0">
    <property type="entry name" value="RETROGRADE REGULATION PROTEIN 2"/>
    <property type="match status" value="1"/>
</dbReference>
<dbReference type="Pfam" id="PF02541">
    <property type="entry name" value="Ppx-GppA"/>
    <property type="match status" value="1"/>
</dbReference>
<dbReference type="SUPFAM" id="SSF53067">
    <property type="entry name" value="Actin-like ATPase domain"/>
    <property type="match status" value="2"/>
</dbReference>